<proteinExistence type="inferred from homology"/>
<keyword id="KW-1185">Reference proteome</keyword>
<reference key="1">
    <citation type="journal article" date="2006" name="J. Virol.">
        <title>Psittacid herpesvirus 1 and infectious laryngotracheitis virus: Comparative genome sequence analysis of two avian alphaherpesviruses.</title>
        <authorList>
            <person name="Thureen D.R."/>
            <person name="Keeler C.L. Jr."/>
        </authorList>
    </citation>
    <scope>NUCLEOTIDE SEQUENCE [LARGE SCALE GENOMIC DNA]</scope>
</reference>
<accession>Q6UDH9</accession>
<name>UL15B_PSHV1</name>
<feature type="chain" id="PRO_0000406862" description="Large terminase protein homolog UL15b">
    <location>
        <begin position="1"/>
        <end position="450"/>
    </location>
</feature>
<organism>
    <name type="scientific">Psittacid herpesvirus 1 (isolate Amazon parrot/-/97-0001/1997)</name>
    <name type="common">PsHV-1</name>
    <name type="synonym">Pacheco's disease virus</name>
    <dbReference type="NCBI Taxonomy" id="670426"/>
    <lineage>
        <taxon>Viruses</taxon>
        <taxon>Duplodnaviria</taxon>
        <taxon>Heunggongvirae</taxon>
        <taxon>Peploviricota</taxon>
        <taxon>Herviviricetes</taxon>
        <taxon>Herpesvirales</taxon>
        <taxon>Orthoherpesviridae</taxon>
        <taxon>Alphaherpesvirinae</taxon>
        <taxon>Iltovirus</taxon>
        <taxon>Iltovirus psittacidalpha1</taxon>
        <taxon>Psittacid alphaherpesvirus 1</taxon>
    </lineage>
</organism>
<comment type="miscellaneous">
    <text>The PsHV-1 may encode two large terminase protein homologs UL15a and UL15b. The terminase function was assigned to UL15a since it shares a stronger sequence homology with the other family members.</text>
</comment>
<comment type="similarity">
    <text evidence="1">Belongs to the herpesviridae large terminase family.</text>
</comment>
<gene>
    <name type="primary">UL15b</name>
</gene>
<dbReference type="EMBL" id="AY372243">
    <property type="protein sequence ID" value="AAQ73731.1"/>
    <property type="molecule type" value="Genomic_DNA"/>
</dbReference>
<dbReference type="SMR" id="Q6UDH9"/>
<dbReference type="Proteomes" id="UP000006840">
    <property type="component" value="Segment"/>
</dbReference>
<dbReference type="GO" id="GO:0051276">
    <property type="term" value="P:chromosome organization"/>
    <property type="evidence" value="ECO:0007669"/>
    <property type="project" value="InterPro"/>
</dbReference>
<dbReference type="Gene3D" id="3.40.50.300">
    <property type="entry name" value="P-loop containing nucleotide triphosphate hydrolases"/>
    <property type="match status" value="1"/>
</dbReference>
<dbReference type="InterPro" id="IPR003499">
    <property type="entry name" value="DNA_pack_N"/>
</dbReference>
<dbReference type="InterPro" id="IPR027417">
    <property type="entry name" value="P-loop_NTPase"/>
</dbReference>
<dbReference type="Pfam" id="PF02500">
    <property type="entry name" value="DNA_pack_N"/>
    <property type="match status" value="1"/>
</dbReference>
<protein>
    <recommendedName>
        <fullName>Large terminase protein homolog UL15b</fullName>
    </recommendedName>
</protein>
<sequence>MFGRESADLAKKYFESLRKKAADKRFARYEGSAASETPSATGPLLRGGHEELNRGCANAARDGFELAAQPEPRRVTGFQFAVDVSQRFQACIPPVGSLHSCCAASCMFAFAASEALYETLVADSLEAARLKVGAEYKNLANDSGASDGEMAPPRPDSMLGGLRGALDELAFAQYSNADAEAHERVYDGVMAGYSDMICSDEFAQLSDFVFRFAALLKTSFKGTTGAGRGAYYVSPGSNKRRRLNRGNSSRNGYRPREGRLELFQKMILMHATYFAACITLDDESTERMDRYLAEVFNTPLFSSPALHHFKQRTSVFLVPRRHGKTWFLVPLISLLVSCFEGLRIGYTAHLRKATKPVFEEIYARLCRWYGEDRVHQIKGETIAFSFKNGARSSIVFASSQNTNVSIRQLLYGVAAKARCGIDDANGRVSELAFYFCSHGAPLNFLLLSAP</sequence>
<organismHost>
    <name type="scientific">Amazona oratrix</name>
    <name type="common">yellow-headed parrot</name>
    <dbReference type="NCBI Taxonomy" id="152276"/>
</organismHost>
<evidence type="ECO:0000305" key="1"/>